<dbReference type="EC" id="2.3.1.35" evidence="1"/>
<dbReference type="EC" id="2.3.1.1" evidence="1"/>
<dbReference type="EMBL" id="CP000082">
    <property type="protein sequence ID" value="AAZ19049.1"/>
    <property type="molecule type" value="Genomic_DNA"/>
</dbReference>
<dbReference type="RefSeq" id="WP_011280471.1">
    <property type="nucleotide sequence ID" value="NC_007204.1"/>
</dbReference>
<dbReference type="SMR" id="Q4FSF9"/>
<dbReference type="STRING" id="259536.Psyc_1198"/>
<dbReference type="MEROPS" id="T05.001"/>
<dbReference type="KEGG" id="par:Psyc_1198"/>
<dbReference type="eggNOG" id="COG1364">
    <property type="taxonomic scope" value="Bacteria"/>
</dbReference>
<dbReference type="HOGENOM" id="CLU_027172_1_0_6"/>
<dbReference type="OrthoDB" id="9804242at2"/>
<dbReference type="UniPathway" id="UPA00068">
    <property type="reaction ID" value="UER00106"/>
</dbReference>
<dbReference type="UniPathway" id="UPA00068">
    <property type="reaction ID" value="UER00111"/>
</dbReference>
<dbReference type="Proteomes" id="UP000000546">
    <property type="component" value="Chromosome"/>
</dbReference>
<dbReference type="GO" id="GO:0005737">
    <property type="term" value="C:cytoplasm"/>
    <property type="evidence" value="ECO:0007669"/>
    <property type="project" value="UniProtKB-SubCell"/>
</dbReference>
<dbReference type="GO" id="GO:0004358">
    <property type="term" value="F:glutamate N-acetyltransferase activity"/>
    <property type="evidence" value="ECO:0007669"/>
    <property type="project" value="UniProtKB-UniRule"/>
</dbReference>
<dbReference type="GO" id="GO:0004042">
    <property type="term" value="F:L-glutamate N-acetyltransferase activity"/>
    <property type="evidence" value="ECO:0007669"/>
    <property type="project" value="UniProtKB-UniRule"/>
</dbReference>
<dbReference type="GO" id="GO:0006526">
    <property type="term" value="P:L-arginine biosynthetic process"/>
    <property type="evidence" value="ECO:0007669"/>
    <property type="project" value="UniProtKB-UniRule"/>
</dbReference>
<dbReference type="GO" id="GO:0006592">
    <property type="term" value="P:ornithine biosynthetic process"/>
    <property type="evidence" value="ECO:0007669"/>
    <property type="project" value="TreeGrafter"/>
</dbReference>
<dbReference type="CDD" id="cd02152">
    <property type="entry name" value="OAT"/>
    <property type="match status" value="1"/>
</dbReference>
<dbReference type="FunFam" id="3.10.20.340:FF:000001">
    <property type="entry name" value="Arginine biosynthesis bifunctional protein ArgJ, chloroplastic"/>
    <property type="match status" value="1"/>
</dbReference>
<dbReference type="FunFam" id="3.60.70.12:FF:000001">
    <property type="entry name" value="Arginine biosynthesis bifunctional protein ArgJ, chloroplastic"/>
    <property type="match status" value="1"/>
</dbReference>
<dbReference type="Gene3D" id="3.10.20.340">
    <property type="entry name" value="ArgJ beta chain, C-terminal domain"/>
    <property type="match status" value="1"/>
</dbReference>
<dbReference type="Gene3D" id="3.60.70.12">
    <property type="entry name" value="L-amino peptidase D-ALA esterase/amidase"/>
    <property type="match status" value="1"/>
</dbReference>
<dbReference type="HAMAP" id="MF_01106">
    <property type="entry name" value="ArgJ"/>
    <property type="match status" value="1"/>
</dbReference>
<dbReference type="InterPro" id="IPR002813">
    <property type="entry name" value="Arg_biosynth_ArgJ"/>
</dbReference>
<dbReference type="InterPro" id="IPR016117">
    <property type="entry name" value="ArgJ-like_dom_sf"/>
</dbReference>
<dbReference type="InterPro" id="IPR042195">
    <property type="entry name" value="ArgJ_beta_C"/>
</dbReference>
<dbReference type="NCBIfam" id="TIGR00120">
    <property type="entry name" value="ArgJ"/>
    <property type="match status" value="1"/>
</dbReference>
<dbReference type="NCBIfam" id="NF003802">
    <property type="entry name" value="PRK05388.1"/>
    <property type="match status" value="1"/>
</dbReference>
<dbReference type="PANTHER" id="PTHR23100">
    <property type="entry name" value="ARGININE BIOSYNTHESIS BIFUNCTIONAL PROTEIN ARGJ"/>
    <property type="match status" value="1"/>
</dbReference>
<dbReference type="PANTHER" id="PTHR23100:SF0">
    <property type="entry name" value="ARGININE BIOSYNTHESIS BIFUNCTIONAL PROTEIN ARGJ, MITOCHONDRIAL"/>
    <property type="match status" value="1"/>
</dbReference>
<dbReference type="Pfam" id="PF01960">
    <property type="entry name" value="ArgJ"/>
    <property type="match status" value="1"/>
</dbReference>
<dbReference type="SUPFAM" id="SSF56266">
    <property type="entry name" value="DmpA/ArgJ-like"/>
    <property type="match status" value="1"/>
</dbReference>
<reference key="1">
    <citation type="journal article" date="2010" name="Appl. Environ. Microbiol.">
        <title>The genome sequence of Psychrobacter arcticus 273-4, a psychroactive Siberian permafrost bacterium, reveals mechanisms for adaptation to low-temperature growth.</title>
        <authorList>
            <person name="Ayala-del-Rio H.L."/>
            <person name="Chain P.S."/>
            <person name="Grzymski J.J."/>
            <person name="Ponder M.A."/>
            <person name="Ivanova N."/>
            <person name="Bergholz P.W."/>
            <person name="Di Bartolo G."/>
            <person name="Hauser L."/>
            <person name="Land M."/>
            <person name="Bakermans C."/>
            <person name="Rodrigues D."/>
            <person name="Klappenbach J."/>
            <person name="Zarka D."/>
            <person name="Larimer F."/>
            <person name="Richardson P."/>
            <person name="Murray A."/>
            <person name="Thomashow M."/>
            <person name="Tiedje J.M."/>
        </authorList>
    </citation>
    <scope>NUCLEOTIDE SEQUENCE [LARGE SCALE GENOMIC DNA]</scope>
    <source>
        <strain>DSM 17307 / VKM B-2377 / 273-4</strain>
    </source>
</reference>
<organism>
    <name type="scientific">Psychrobacter arcticus (strain DSM 17307 / VKM B-2377 / 273-4)</name>
    <dbReference type="NCBI Taxonomy" id="259536"/>
    <lineage>
        <taxon>Bacteria</taxon>
        <taxon>Pseudomonadati</taxon>
        <taxon>Pseudomonadota</taxon>
        <taxon>Gammaproteobacteria</taxon>
        <taxon>Moraxellales</taxon>
        <taxon>Moraxellaceae</taxon>
        <taxon>Psychrobacter</taxon>
    </lineage>
</organism>
<keyword id="KW-0012">Acyltransferase</keyword>
<keyword id="KW-0028">Amino-acid biosynthesis</keyword>
<keyword id="KW-0055">Arginine biosynthesis</keyword>
<keyword id="KW-0068">Autocatalytic cleavage</keyword>
<keyword id="KW-0963">Cytoplasm</keyword>
<keyword id="KW-0511">Multifunctional enzyme</keyword>
<keyword id="KW-1185">Reference proteome</keyword>
<keyword id="KW-0808">Transferase</keyword>
<gene>
    <name evidence="1" type="primary">argJ</name>
    <name type="ordered locus">Psyc_1198</name>
</gene>
<protein>
    <recommendedName>
        <fullName evidence="1">Arginine biosynthesis bifunctional protein ArgJ</fullName>
    </recommendedName>
    <domain>
        <recommendedName>
            <fullName evidence="1">Glutamate N-acetyltransferase</fullName>
            <ecNumber evidence="1">2.3.1.35</ecNumber>
        </recommendedName>
        <alternativeName>
            <fullName evidence="1">Ornithine acetyltransferase</fullName>
            <shortName evidence="1">OATase</shortName>
        </alternativeName>
        <alternativeName>
            <fullName evidence="1">Ornithine transacetylase</fullName>
        </alternativeName>
    </domain>
    <domain>
        <recommendedName>
            <fullName evidence="1">Amino-acid acetyltransferase</fullName>
            <ecNumber evidence="1">2.3.1.1</ecNumber>
        </recommendedName>
        <alternativeName>
            <fullName evidence="1">N-acetylglutamate synthase</fullName>
            <shortName evidence="1">AGSase</shortName>
        </alternativeName>
    </domain>
    <component>
        <recommendedName>
            <fullName evidence="1">Arginine biosynthesis bifunctional protein ArgJ alpha chain</fullName>
        </recommendedName>
    </component>
    <component>
        <recommendedName>
            <fullName evidence="1">Arginine biosynthesis bifunctional protein ArgJ beta chain</fullName>
        </recommendedName>
    </component>
</protein>
<feature type="chain" id="PRO_0000227254" description="Arginine biosynthesis bifunctional protein ArgJ alpha chain" evidence="1">
    <location>
        <begin position="1"/>
        <end position="190"/>
    </location>
</feature>
<feature type="chain" id="PRO_0000227255" description="Arginine biosynthesis bifunctional protein ArgJ beta chain" evidence="1">
    <location>
        <begin position="191"/>
        <end position="407"/>
    </location>
</feature>
<feature type="active site" description="Nucleophile" evidence="1">
    <location>
        <position position="191"/>
    </location>
</feature>
<feature type="binding site" evidence="1">
    <location>
        <position position="154"/>
    </location>
    <ligand>
        <name>substrate</name>
    </ligand>
</feature>
<feature type="binding site" evidence="1">
    <location>
        <position position="180"/>
    </location>
    <ligand>
        <name>substrate</name>
    </ligand>
</feature>
<feature type="binding site" evidence="1">
    <location>
        <position position="191"/>
    </location>
    <ligand>
        <name>substrate</name>
    </ligand>
</feature>
<feature type="binding site" evidence="1">
    <location>
        <position position="278"/>
    </location>
    <ligand>
        <name>substrate</name>
    </ligand>
</feature>
<feature type="binding site" evidence="1">
    <location>
        <position position="402"/>
    </location>
    <ligand>
        <name>substrate</name>
    </ligand>
</feature>
<feature type="binding site" evidence="1">
    <location>
        <position position="407"/>
    </location>
    <ligand>
        <name>substrate</name>
    </ligand>
</feature>
<feature type="site" description="Involved in the stabilization of negative charge on the oxyanion by the formation of the oxyanion hole" evidence="1">
    <location>
        <position position="117"/>
    </location>
</feature>
<feature type="site" description="Involved in the stabilization of negative charge on the oxyanion by the formation of the oxyanion hole" evidence="1">
    <location>
        <position position="118"/>
    </location>
</feature>
<feature type="site" description="Cleavage; by autolysis" evidence="1">
    <location>
        <begin position="190"/>
        <end position="191"/>
    </location>
</feature>
<comment type="function">
    <text evidence="1">Catalyzes two activities which are involved in the cyclic version of arginine biosynthesis: the synthesis of N-acetylglutamate from glutamate and acetyl-CoA as the acetyl donor, and of ornithine by transacetylation between N(2)-acetylornithine and glutamate.</text>
</comment>
<comment type="catalytic activity">
    <reaction evidence="1">
        <text>N(2)-acetyl-L-ornithine + L-glutamate = N-acetyl-L-glutamate + L-ornithine</text>
        <dbReference type="Rhea" id="RHEA:15349"/>
        <dbReference type="ChEBI" id="CHEBI:29985"/>
        <dbReference type="ChEBI" id="CHEBI:44337"/>
        <dbReference type="ChEBI" id="CHEBI:46911"/>
        <dbReference type="ChEBI" id="CHEBI:57805"/>
        <dbReference type="EC" id="2.3.1.35"/>
    </reaction>
</comment>
<comment type="catalytic activity">
    <reaction evidence="1">
        <text>L-glutamate + acetyl-CoA = N-acetyl-L-glutamate + CoA + H(+)</text>
        <dbReference type="Rhea" id="RHEA:24292"/>
        <dbReference type="ChEBI" id="CHEBI:15378"/>
        <dbReference type="ChEBI" id="CHEBI:29985"/>
        <dbReference type="ChEBI" id="CHEBI:44337"/>
        <dbReference type="ChEBI" id="CHEBI:57287"/>
        <dbReference type="ChEBI" id="CHEBI:57288"/>
        <dbReference type="EC" id="2.3.1.1"/>
    </reaction>
</comment>
<comment type="pathway">
    <text evidence="1">Amino-acid biosynthesis; L-arginine biosynthesis; L-ornithine and N-acetyl-L-glutamate from L-glutamate and N(2)-acetyl-L-ornithine (cyclic): step 1/1.</text>
</comment>
<comment type="pathway">
    <text evidence="1">Amino-acid biosynthesis; L-arginine biosynthesis; N(2)-acetyl-L-ornithine from L-glutamate: step 1/4.</text>
</comment>
<comment type="subunit">
    <text evidence="1">Heterotetramer of two alpha and two beta chains.</text>
</comment>
<comment type="subcellular location">
    <subcellularLocation>
        <location evidence="1">Cytoplasm</location>
    </subcellularLocation>
</comment>
<comment type="similarity">
    <text evidence="1">Belongs to the ArgJ family.</text>
</comment>
<sequence length="407" mass="43075">MAVGNVAVPETIYPIEGIKLSATAAGVRYKDRDDLVVIEIATDAATAVVTTKNAFCAAPVRVLREHFAKASPRYLVTNTGNANAGTGADGKRRAIDICAALAAKAGVNNNTVLPFSTGVIGEPLNSEAIIAGLDNALANLAPDNWLAAANGIRTTDTIPKLTSKKVNVAGSHYHITGMSKGSGMIRPNMATMLGYVATDANIAADLLQEMLSAINEQSFNRITVDGDTSTNDCCVLIATGAASSDIIDSPEHPHYQPLFDALAEVFIRLAQLIVRDGEGATKFMTVKVTGGKTTQECCDVAYAVAHSPLVKTAFFASDANWGRILAAVGYAGVEDLDTEQVDVYLDEVMICQNGGVAPTYTEEAGKTVMSRPEITIHIDLARGEAIDTVYTCDLSYDYVKINADYRS</sequence>
<name>ARGJ_PSYA2</name>
<proteinExistence type="inferred from homology"/>
<accession>Q4FSF9</accession>
<evidence type="ECO:0000255" key="1">
    <source>
        <dbReference type="HAMAP-Rule" id="MF_01106"/>
    </source>
</evidence>